<sequence length="250" mass="28319">MPAGTVPTKDDVLVPETLLKKRKNADQIRAAKEAAAAEKKAANAEKDKVIFSRAEKYVKEYREAEREQIRLRREAKLNGTFYVPAEPKLVFVIRIKGISKMAPKPRKVLQLLRLHQINNGVFVRITKATAELLRIVEPYIAFGYPNLASVRQLVYKRGYGKVNKQRIPLSDNAIIEEALGKYGIICMEDLIHEIYTVGPAFKQASNFLWPFKLSNPSGGWGVRRKFKHYIEGGSTGNREENINALIKAQN</sequence>
<accession>Q6C603</accession>
<dbReference type="EMBL" id="CR382131">
    <property type="protein sequence ID" value="CAG79502.1"/>
    <property type="molecule type" value="Genomic_DNA"/>
</dbReference>
<dbReference type="RefSeq" id="XP_503909.1">
    <property type="nucleotide sequence ID" value="XM_503909.1"/>
</dbReference>
<dbReference type="SMR" id="Q6C603"/>
<dbReference type="FunCoup" id="Q6C603">
    <property type="interactions" value="1397"/>
</dbReference>
<dbReference type="STRING" id="284591.Q6C603"/>
<dbReference type="EnsemblFungi" id="CAG79502">
    <property type="protein sequence ID" value="CAG79502"/>
    <property type="gene ID" value="YALI0_E13618g"/>
</dbReference>
<dbReference type="KEGG" id="yli:2911479"/>
<dbReference type="VEuPathDB" id="FungiDB:YALI0_E13618g"/>
<dbReference type="HOGENOM" id="CLU_055156_0_2_1"/>
<dbReference type="InParanoid" id="Q6C603"/>
<dbReference type="OMA" id="IVEPWIA"/>
<dbReference type="OrthoDB" id="109718at4891"/>
<dbReference type="Proteomes" id="UP000001300">
    <property type="component" value="Chromosome E"/>
</dbReference>
<dbReference type="GO" id="GO:0022625">
    <property type="term" value="C:cytosolic large ribosomal subunit"/>
    <property type="evidence" value="ECO:0000318"/>
    <property type="project" value="GO_Central"/>
</dbReference>
<dbReference type="GO" id="GO:0003723">
    <property type="term" value="F:RNA binding"/>
    <property type="evidence" value="ECO:0000318"/>
    <property type="project" value="GO_Central"/>
</dbReference>
<dbReference type="GO" id="GO:0003735">
    <property type="term" value="F:structural constituent of ribosome"/>
    <property type="evidence" value="ECO:0000318"/>
    <property type="project" value="GO_Central"/>
</dbReference>
<dbReference type="GO" id="GO:0000463">
    <property type="term" value="P:maturation of LSU-rRNA from tricistronic rRNA transcript (SSU-rRNA, 5.8S rRNA, LSU-rRNA)"/>
    <property type="evidence" value="ECO:0000318"/>
    <property type="project" value="GO_Central"/>
</dbReference>
<dbReference type="CDD" id="cd01657">
    <property type="entry name" value="Ribosomal_L7_archeal_euk"/>
    <property type="match status" value="1"/>
</dbReference>
<dbReference type="FunFam" id="3.30.1390.20:FF:000002">
    <property type="entry name" value="60S ribosomal protein L7"/>
    <property type="match status" value="1"/>
</dbReference>
<dbReference type="FunFam" id="3.30.1390.20:FF:000003">
    <property type="entry name" value="60S ribosomal protein L7"/>
    <property type="match status" value="1"/>
</dbReference>
<dbReference type="Gene3D" id="3.30.1390.20">
    <property type="entry name" value="Ribosomal protein L30, ferredoxin-like fold domain"/>
    <property type="match status" value="2"/>
</dbReference>
<dbReference type="InterPro" id="IPR036919">
    <property type="entry name" value="Ribo_uL30_ferredoxin-like_sf"/>
</dbReference>
<dbReference type="InterPro" id="IPR039699">
    <property type="entry name" value="Ribosomal_uL30"/>
</dbReference>
<dbReference type="InterPro" id="IPR018038">
    <property type="entry name" value="Ribosomal_uL30_CS"/>
</dbReference>
<dbReference type="InterPro" id="IPR005998">
    <property type="entry name" value="Ribosomal_uL30_euk"/>
</dbReference>
<dbReference type="InterPro" id="IPR035808">
    <property type="entry name" value="Ribosomal_uL30_euk_arc"/>
</dbReference>
<dbReference type="InterPro" id="IPR016082">
    <property type="entry name" value="Ribosomal_uL30_ferredoxin-like"/>
</dbReference>
<dbReference type="InterPro" id="IPR012988">
    <property type="entry name" value="Ribosomal_uL30_N_euk"/>
</dbReference>
<dbReference type="NCBIfam" id="TIGR01310">
    <property type="entry name" value="uL30_euk"/>
    <property type="match status" value="1"/>
</dbReference>
<dbReference type="PANTHER" id="PTHR11524">
    <property type="entry name" value="60S RIBOSOMAL PROTEIN L7"/>
    <property type="match status" value="1"/>
</dbReference>
<dbReference type="PANTHER" id="PTHR11524:SF16">
    <property type="entry name" value="LARGE RIBOSOMAL SUBUNIT PROTEIN UL30"/>
    <property type="match status" value="1"/>
</dbReference>
<dbReference type="Pfam" id="PF00327">
    <property type="entry name" value="Ribosomal_L30"/>
    <property type="match status" value="1"/>
</dbReference>
<dbReference type="Pfam" id="PF08079">
    <property type="entry name" value="Ribosomal_L30_N"/>
    <property type="match status" value="1"/>
</dbReference>
<dbReference type="SUPFAM" id="SSF55129">
    <property type="entry name" value="Ribosomal protein L30p/L7e"/>
    <property type="match status" value="1"/>
</dbReference>
<dbReference type="PROSITE" id="PS00634">
    <property type="entry name" value="RIBOSOMAL_L30"/>
    <property type="match status" value="1"/>
</dbReference>
<name>RL7_YARLI</name>
<feature type="chain" id="PRO_0000104650" description="Large ribosomal subunit protein uL30">
    <location>
        <begin position="1"/>
        <end position="250"/>
    </location>
</feature>
<keyword id="KW-1185">Reference proteome</keyword>
<keyword id="KW-0687">Ribonucleoprotein</keyword>
<keyword id="KW-0689">Ribosomal protein</keyword>
<reference key="1">
    <citation type="journal article" date="2004" name="Nature">
        <title>Genome evolution in yeasts.</title>
        <authorList>
            <person name="Dujon B."/>
            <person name="Sherman D."/>
            <person name="Fischer G."/>
            <person name="Durrens P."/>
            <person name="Casaregola S."/>
            <person name="Lafontaine I."/>
            <person name="de Montigny J."/>
            <person name="Marck C."/>
            <person name="Neuveglise C."/>
            <person name="Talla E."/>
            <person name="Goffard N."/>
            <person name="Frangeul L."/>
            <person name="Aigle M."/>
            <person name="Anthouard V."/>
            <person name="Babour A."/>
            <person name="Barbe V."/>
            <person name="Barnay S."/>
            <person name="Blanchin S."/>
            <person name="Beckerich J.-M."/>
            <person name="Beyne E."/>
            <person name="Bleykasten C."/>
            <person name="Boisrame A."/>
            <person name="Boyer J."/>
            <person name="Cattolico L."/>
            <person name="Confanioleri F."/>
            <person name="de Daruvar A."/>
            <person name="Despons L."/>
            <person name="Fabre E."/>
            <person name="Fairhead C."/>
            <person name="Ferry-Dumazet H."/>
            <person name="Groppi A."/>
            <person name="Hantraye F."/>
            <person name="Hennequin C."/>
            <person name="Jauniaux N."/>
            <person name="Joyet P."/>
            <person name="Kachouri R."/>
            <person name="Kerrest A."/>
            <person name="Koszul R."/>
            <person name="Lemaire M."/>
            <person name="Lesur I."/>
            <person name="Ma L."/>
            <person name="Muller H."/>
            <person name="Nicaud J.-M."/>
            <person name="Nikolski M."/>
            <person name="Oztas S."/>
            <person name="Ozier-Kalogeropoulos O."/>
            <person name="Pellenz S."/>
            <person name="Potier S."/>
            <person name="Richard G.-F."/>
            <person name="Straub M.-L."/>
            <person name="Suleau A."/>
            <person name="Swennen D."/>
            <person name="Tekaia F."/>
            <person name="Wesolowski-Louvel M."/>
            <person name="Westhof E."/>
            <person name="Wirth B."/>
            <person name="Zeniou-Meyer M."/>
            <person name="Zivanovic Y."/>
            <person name="Bolotin-Fukuhara M."/>
            <person name="Thierry A."/>
            <person name="Bouchier C."/>
            <person name="Caudron B."/>
            <person name="Scarpelli C."/>
            <person name="Gaillardin C."/>
            <person name="Weissenbach J."/>
            <person name="Wincker P."/>
            <person name="Souciet J.-L."/>
        </authorList>
    </citation>
    <scope>NUCLEOTIDE SEQUENCE [LARGE SCALE GENOMIC DNA]</scope>
    <source>
        <strain>CLIB 122 / E 150</strain>
    </source>
</reference>
<comment type="similarity">
    <text evidence="1">Belongs to the universal ribosomal protein uL30 family.</text>
</comment>
<evidence type="ECO:0000305" key="1"/>
<protein>
    <recommendedName>
        <fullName evidence="1">Large ribosomal subunit protein uL30</fullName>
    </recommendedName>
    <alternativeName>
        <fullName>60S ribosomal protein L7</fullName>
    </alternativeName>
</protein>
<organism>
    <name type="scientific">Yarrowia lipolytica (strain CLIB 122 / E 150)</name>
    <name type="common">Yeast</name>
    <name type="synonym">Candida lipolytica</name>
    <dbReference type="NCBI Taxonomy" id="284591"/>
    <lineage>
        <taxon>Eukaryota</taxon>
        <taxon>Fungi</taxon>
        <taxon>Dikarya</taxon>
        <taxon>Ascomycota</taxon>
        <taxon>Saccharomycotina</taxon>
        <taxon>Dipodascomycetes</taxon>
        <taxon>Dipodascales</taxon>
        <taxon>Dipodascales incertae sedis</taxon>
        <taxon>Yarrowia</taxon>
    </lineage>
</organism>
<proteinExistence type="inferred from homology"/>
<gene>
    <name type="primary">RPL7</name>
    <name type="ordered locus">YALI0E13618g</name>
</gene>